<accession>B7MHL6</accession>
<dbReference type="EC" id="2.6.1.52" evidence="1"/>
<dbReference type="EMBL" id="CU928161">
    <property type="protein sequence ID" value="CAR02267.1"/>
    <property type="molecule type" value="Genomic_DNA"/>
</dbReference>
<dbReference type="RefSeq" id="WP_000057124.1">
    <property type="nucleotide sequence ID" value="NC_011742.1"/>
</dbReference>
<dbReference type="SMR" id="B7MHL6"/>
<dbReference type="KEGG" id="ecz:ECS88_0935"/>
<dbReference type="HOGENOM" id="CLU_034866_0_2_6"/>
<dbReference type="UniPathway" id="UPA00135">
    <property type="reaction ID" value="UER00197"/>
</dbReference>
<dbReference type="UniPathway" id="UPA00244">
    <property type="reaction ID" value="UER00311"/>
</dbReference>
<dbReference type="Proteomes" id="UP000000747">
    <property type="component" value="Chromosome"/>
</dbReference>
<dbReference type="GO" id="GO:0005737">
    <property type="term" value="C:cytoplasm"/>
    <property type="evidence" value="ECO:0007669"/>
    <property type="project" value="UniProtKB-SubCell"/>
</dbReference>
<dbReference type="GO" id="GO:0004648">
    <property type="term" value="F:O-phospho-L-serine:2-oxoglutarate aminotransferase activity"/>
    <property type="evidence" value="ECO:0007669"/>
    <property type="project" value="UniProtKB-UniRule"/>
</dbReference>
<dbReference type="GO" id="GO:0030170">
    <property type="term" value="F:pyridoxal phosphate binding"/>
    <property type="evidence" value="ECO:0007669"/>
    <property type="project" value="UniProtKB-UniRule"/>
</dbReference>
<dbReference type="GO" id="GO:0006564">
    <property type="term" value="P:L-serine biosynthetic process"/>
    <property type="evidence" value="ECO:0007669"/>
    <property type="project" value="UniProtKB-UniRule"/>
</dbReference>
<dbReference type="GO" id="GO:0008615">
    <property type="term" value="P:pyridoxine biosynthetic process"/>
    <property type="evidence" value="ECO:0007669"/>
    <property type="project" value="UniProtKB-UniRule"/>
</dbReference>
<dbReference type="CDD" id="cd00611">
    <property type="entry name" value="PSAT_like"/>
    <property type="match status" value="1"/>
</dbReference>
<dbReference type="FunFam" id="3.40.640.10:FF:000010">
    <property type="entry name" value="Phosphoserine aminotransferase"/>
    <property type="match status" value="1"/>
</dbReference>
<dbReference type="FunFam" id="3.90.1150.10:FF:000006">
    <property type="entry name" value="Phosphoserine aminotransferase"/>
    <property type="match status" value="1"/>
</dbReference>
<dbReference type="Gene3D" id="3.90.1150.10">
    <property type="entry name" value="Aspartate Aminotransferase, domain 1"/>
    <property type="match status" value="1"/>
</dbReference>
<dbReference type="Gene3D" id="3.40.640.10">
    <property type="entry name" value="Type I PLP-dependent aspartate aminotransferase-like (Major domain)"/>
    <property type="match status" value="1"/>
</dbReference>
<dbReference type="HAMAP" id="MF_00160">
    <property type="entry name" value="SerC_aminotrans_5"/>
    <property type="match status" value="1"/>
</dbReference>
<dbReference type="InterPro" id="IPR000192">
    <property type="entry name" value="Aminotrans_V_dom"/>
</dbReference>
<dbReference type="InterPro" id="IPR020578">
    <property type="entry name" value="Aminotrans_V_PyrdxlP_BS"/>
</dbReference>
<dbReference type="InterPro" id="IPR022278">
    <property type="entry name" value="Pser_aminoTfrase"/>
</dbReference>
<dbReference type="InterPro" id="IPR015424">
    <property type="entry name" value="PyrdxlP-dep_Trfase"/>
</dbReference>
<dbReference type="InterPro" id="IPR015421">
    <property type="entry name" value="PyrdxlP-dep_Trfase_major"/>
</dbReference>
<dbReference type="InterPro" id="IPR015422">
    <property type="entry name" value="PyrdxlP-dep_Trfase_small"/>
</dbReference>
<dbReference type="NCBIfam" id="NF003764">
    <property type="entry name" value="PRK05355.1"/>
    <property type="match status" value="1"/>
</dbReference>
<dbReference type="NCBIfam" id="TIGR01364">
    <property type="entry name" value="serC_1"/>
    <property type="match status" value="1"/>
</dbReference>
<dbReference type="PANTHER" id="PTHR43247">
    <property type="entry name" value="PHOSPHOSERINE AMINOTRANSFERASE"/>
    <property type="match status" value="1"/>
</dbReference>
<dbReference type="PANTHER" id="PTHR43247:SF1">
    <property type="entry name" value="PHOSPHOSERINE AMINOTRANSFERASE"/>
    <property type="match status" value="1"/>
</dbReference>
<dbReference type="Pfam" id="PF00266">
    <property type="entry name" value="Aminotran_5"/>
    <property type="match status" value="1"/>
</dbReference>
<dbReference type="PIRSF" id="PIRSF000525">
    <property type="entry name" value="SerC"/>
    <property type="match status" value="1"/>
</dbReference>
<dbReference type="SUPFAM" id="SSF53383">
    <property type="entry name" value="PLP-dependent transferases"/>
    <property type="match status" value="1"/>
</dbReference>
<dbReference type="PROSITE" id="PS00595">
    <property type="entry name" value="AA_TRANSFER_CLASS_5"/>
    <property type="match status" value="1"/>
</dbReference>
<comment type="function">
    <text evidence="1">Catalyzes the reversible conversion of 3-phosphohydroxypyruvate to phosphoserine and of 3-hydroxy-2-oxo-4-phosphonooxybutanoate to phosphohydroxythreonine.</text>
</comment>
<comment type="catalytic activity">
    <reaction evidence="1">
        <text>O-phospho-L-serine + 2-oxoglutarate = 3-phosphooxypyruvate + L-glutamate</text>
        <dbReference type="Rhea" id="RHEA:14329"/>
        <dbReference type="ChEBI" id="CHEBI:16810"/>
        <dbReference type="ChEBI" id="CHEBI:18110"/>
        <dbReference type="ChEBI" id="CHEBI:29985"/>
        <dbReference type="ChEBI" id="CHEBI:57524"/>
        <dbReference type="EC" id="2.6.1.52"/>
    </reaction>
</comment>
<comment type="catalytic activity">
    <reaction evidence="1">
        <text>4-(phosphooxy)-L-threonine + 2-oxoglutarate = (R)-3-hydroxy-2-oxo-4-phosphooxybutanoate + L-glutamate</text>
        <dbReference type="Rhea" id="RHEA:16573"/>
        <dbReference type="ChEBI" id="CHEBI:16810"/>
        <dbReference type="ChEBI" id="CHEBI:29985"/>
        <dbReference type="ChEBI" id="CHEBI:58452"/>
        <dbReference type="ChEBI" id="CHEBI:58538"/>
        <dbReference type="EC" id="2.6.1.52"/>
    </reaction>
</comment>
<comment type="cofactor">
    <cofactor evidence="1">
        <name>pyridoxal 5'-phosphate</name>
        <dbReference type="ChEBI" id="CHEBI:597326"/>
    </cofactor>
    <text evidence="1">Binds 1 pyridoxal phosphate per subunit.</text>
</comment>
<comment type="pathway">
    <text evidence="1">Amino-acid biosynthesis; L-serine biosynthesis; L-serine from 3-phospho-D-glycerate: step 2/3.</text>
</comment>
<comment type="pathway">
    <text evidence="1">Cofactor biosynthesis; pyridoxine 5'-phosphate biosynthesis; pyridoxine 5'-phosphate from D-erythrose 4-phosphate: step 3/5.</text>
</comment>
<comment type="subunit">
    <text evidence="1">Homodimer.</text>
</comment>
<comment type="subcellular location">
    <subcellularLocation>
        <location evidence="1">Cytoplasm</location>
    </subcellularLocation>
</comment>
<comment type="similarity">
    <text evidence="1">Belongs to the class-V pyridoxal-phosphate-dependent aminotransferase family. SerC subfamily.</text>
</comment>
<gene>
    <name evidence="1" type="primary">serC</name>
    <name type="ordered locus">ECS88_0935</name>
</gene>
<proteinExistence type="inferred from homology"/>
<name>SERC_ECO45</name>
<keyword id="KW-0028">Amino-acid biosynthesis</keyword>
<keyword id="KW-0032">Aminotransferase</keyword>
<keyword id="KW-0963">Cytoplasm</keyword>
<keyword id="KW-0663">Pyridoxal phosphate</keyword>
<keyword id="KW-0664">Pyridoxine biosynthesis</keyword>
<keyword id="KW-1185">Reference proteome</keyword>
<keyword id="KW-0718">Serine biosynthesis</keyword>
<keyword id="KW-0808">Transferase</keyword>
<protein>
    <recommendedName>
        <fullName evidence="1">Phosphoserine aminotransferase</fullName>
        <ecNumber evidence="1">2.6.1.52</ecNumber>
    </recommendedName>
    <alternativeName>
        <fullName evidence="1">Phosphohydroxythreonine aminotransferase</fullName>
        <shortName evidence="1">PSAT</shortName>
    </alternativeName>
</protein>
<sequence length="362" mass="39772">MAQIFNFSSGPAMLPAEVLEQAQQELRDWNGLGTSVMEVSHRGKEFIQVAEEAEKDFRDLLNVPSNYKVLFCHGGGRGQFAAVPLNILGDKTTADYVDAGYWAASAIKEAKKYCTPNVFDAKVTVDGLRAVKPMSEWQLSDNAAYMHYCPNETIDGIAIDETPDFGKDVVVAADFSSTILSRPIDVSRYGVIYAGAQKNIGPAGLTIVIVREDLLGKANIACPSILDYSILNDNDSMFNTPPTFAWYLSGLVFKWLKANGGVAAMDKINQQKAELLYGVIDNSDFYRNDVAKANRSRMNVPFQLADSALDKLFLEESFAAGLHALKGHRVVGGMRASIYNAMPLEGVKALTDFMVEFERRHG</sequence>
<organism>
    <name type="scientific">Escherichia coli O45:K1 (strain S88 / ExPEC)</name>
    <dbReference type="NCBI Taxonomy" id="585035"/>
    <lineage>
        <taxon>Bacteria</taxon>
        <taxon>Pseudomonadati</taxon>
        <taxon>Pseudomonadota</taxon>
        <taxon>Gammaproteobacteria</taxon>
        <taxon>Enterobacterales</taxon>
        <taxon>Enterobacteriaceae</taxon>
        <taxon>Escherichia</taxon>
    </lineage>
</organism>
<reference key="1">
    <citation type="journal article" date="2009" name="PLoS Genet.">
        <title>Organised genome dynamics in the Escherichia coli species results in highly diverse adaptive paths.</title>
        <authorList>
            <person name="Touchon M."/>
            <person name="Hoede C."/>
            <person name="Tenaillon O."/>
            <person name="Barbe V."/>
            <person name="Baeriswyl S."/>
            <person name="Bidet P."/>
            <person name="Bingen E."/>
            <person name="Bonacorsi S."/>
            <person name="Bouchier C."/>
            <person name="Bouvet O."/>
            <person name="Calteau A."/>
            <person name="Chiapello H."/>
            <person name="Clermont O."/>
            <person name="Cruveiller S."/>
            <person name="Danchin A."/>
            <person name="Diard M."/>
            <person name="Dossat C."/>
            <person name="Karoui M.E."/>
            <person name="Frapy E."/>
            <person name="Garry L."/>
            <person name="Ghigo J.M."/>
            <person name="Gilles A.M."/>
            <person name="Johnson J."/>
            <person name="Le Bouguenec C."/>
            <person name="Lescat M."/>
            <person name="Mangenot S."/>
            <person name="Martinez-Jehanne V."/>
            <person name="Matic I."/>
            <person name="Nassif X."/>
            <person name="Oztas S."/>
            <person name="Petit M.A."/>
            <person name="Pichon C."/>
            <person name="Rouy Z."/>
            <person name="Ruf C.S."/>
            <person name="Schneider D."/>
            <person name="Tourret J."/>
            <person name="Vacherie B."/>
            <person name="Vallenet D."/>
            <person name="Medigue C."/>
            <person name="Rocha E.P.C."/>
            <person name="Denamur E."/>
        </authorList>
    </citation>
    <scope>NUCLEOTIDE SEQUENCE [LARGE SCALE GENOMIC DNA]</scope>
    <source>
        <strain>S88 / ExPEC</strain>
    </source>
</reference>
<feature type="chain" id="PRO_1000203520" description="Phosphoserine aminotransferase">
    <location>
        <begin position="1"/>
        <end position="362"/>
    </location>
</feature>
<feature type="binding site" evidence="1">
    <location>
        <position position="9"/>
    </location>
    <ligand>
        <name>L-glutamate</name>
        <dbReference type="ChEBI" id="CHEBI:29985"/>
    </ligand>
</feature>
<feature type="binding site" evidence="1">
    <location>
        <position position="42"/>
    </location>
    <ligand>
        <name>L-glutamate</name>
        <dbReference type="ChEBI" id="CHEBI:29985"/>
    </ligand>
</feature>
<feature type="binding site" evidence="1">
    <location>
        <begin position="76"/>
        <end position="77"/>
    </location>
    <ligand>
        <name>pyridoxal 5'-phosphate</name>
        <dbReference type="ChEBI" id="CHEBI:597326"/>
    </ligand>
</feature>
<feature type="binding site" evidence="1">
    <location>
        <position position="102"/>
    </location>
    <ligand>
        <name>pyridoxal 5'-phosphate</name>
        <dbReference type="ChEBI" id="CHEBI:597326"/>
    </ligand>
</feature>
<feature type="binding site" evidence="1">
    <location>
        <position position="153"/>
    </location>
    <ligand>
        <name>pyridoxal 5'-phosphate</name>
        <dbReference type="ChEBI" id="CHEBI:597326"/>
    </ligand>
</feature>
<feature type="binding site" evidence="1">
    <location>
        <position position="174"/>
    </location>
    <ligand>
        <name>pyridoxal 5'-phosphate</name>
        <dbReference type="ChEBI" id="CHEBI:597326"/>
    </ligand>
</feature>
<feature type="binding site" evidence="1">
    <location>
        <position position="197"/>
    </location>
    <ligand>
        <name>pyridoxal 5'-phosphate</name>
        <dbReference type="ChEBI" id="CHEBI:597326"/>
    </ligand>
</feature>
<feature type="binding site" evidence="1">
    <location>
        <begin position="239"/>
        <end position="240"/>
    </location>
    <ligand>
        <name>pyridoxal 5'-phosphate</name>
        <dbReference type="ChEBI" id="CHEBI:597326"/>
    </ligand>
</feature>
<feature type="modified residue" description="N6-(pyridoxal phosphate)lysine" evidence="1">
    <location>
        <position position="198"/>
    </location>
</feature>
<evidence type="ECO:0000255" key="1">
    <source>
        <dbReference type="HAMAP-Rule" id="MF_00160"/>
    </source>
</evidence>